<sequence>MSERLALYARLVRIDKPIGTLLLLWPTLWALWMAAGGPPALSVFCIFFAGTFLMRSAGCAINDYADRDFDKHVKRTKERPLTAGKIAAWEAVLIAAVLALIAFALILPLNSLTKWLAVVAAVVAGTYPFFKRFFAIPQAYLGIAFGFGIPMAFAAVQDQVPLVAWVMLLANVFWAVAYDTAYAMVDRDDDLLIGIKTSAITFGRFDVAAIMLCYAAFLVLMGWAGVMLSLGWPYWVGLAAAAVCAGYHYTLIRDRDRMRCFAAFRHNNWLGACVFAGTAVAYAIR</sequence>
<name>UBIA_CUPPJ</name>
<feature type="chain" id="PRO_0000262828" description="4-hydroxybenzoate octaprenyltransferase">
    <location>
        <begin position="1"/>
        <end position="285"/>
    </location>
</feature>
<feature type="transmembrane region" description="Helical" evidence="1">
    <location>
        <begin position="28"/>
        <end position="48"/>
    </location>
</feature>
<feature type="transmembrane region" description="Helical" evidence="1">
    <location>
        <begin position="86"/>
        <end position="106"/>
    </location>
</feature>
<feature type="transmembrane region" description="Helical" evidence="1">
    <location>
        <begin position="110"/>
        <end position="130"/>
    </location>
</feature>
<feature type="transmembrane region" description="Helical" evidence="1">
    <location>
        <begin position="133"/>
        <end position="153"/>
    </location>
</feature>
<feature type="transmembrane region" description="Helical" evidence="1">
    <location>
        <begin position="160"/>
        <end position="180"/>
    </location>
</feature>
<feature type="transmembrane region" description="Helical" evidence="1">
    <location>
        <begin position="207"/>
        <end position="227"/>
    </location>
</feature>
<feature type="transmembrane region" description="Helical" evidence="1">
    <location>
        <begin position="232"/>
        <end position="252"/>
    </location>
</feature>
<feature type="transmembrane region" description="Helical" evidence="1">
    <location>
        <begin position="262"/>
        <end position="284"/>
    </location>
</feature>
<organism>
    <name type="scientific">Cupriavidus pinatubonensis (strain JMP 134 / LMG 1197)</name>
    <name type="common">Cupriavidus necator (strain JMP 134)</name>
    <dbReference type="NCBI Taxonomy" id="264198"/>
    <lineage>
        <taxon>Bacteria</taxon>
        <taxon>Pseudomonadati</taxon>
        <taxon>Pseudomonadota</taxon>
        <taxon>Betaproteobacteria</taxon>
        <taxon>Burkholderiales</taxon>
        <taxon>Burkholderiaceae</taxon>
        <taxon>Cupriavidus</taxon>
    </lineage>
</organism>
<dbReference type="EC" id="2.5.1.39" evidence="1"/>
<dbReference type="EMBL" id="CP000090">
    <property type="protein sequence ID" value="AAZ62164.1"/>
    <property type="molecule type" value="Genomic_DNA"/>
</dbReference>
<dbReference type="SMR" id="Q46XG9"/>
<dbReference type="STRING" id="264198.Reut_A2803"/>
<dbReference type="KEGG" id="reu:Reut_A2803"/>
<dbReference type="eggNOG" id="COG0382">
    <property type="taxonomic scope" value="Bacteria"/>
</dbReference>
<dbReference type="HOGENOM" id="CLU_034879_1_0_4"/>
<dbReference type="OrthoDB" id="9782418at2"/>
<dbReference type="UniPathway" id="UPA00232"/>
<dbReference type="GO" id="GO:0005886">
    <property type="term" value="C:plasma membrane"/>
    <property type="evidence" value="ECO:0007669"/>
    <property type="project" value="UniProtKB-SubCell"/>
</dbReference>
<dbReference type="GO" id="GO:0008412">
    <property type="term" value="F:4-hydroxybenzoate polyprenyltransferase activity"/>
    <property type="evidence" value="ECO:0007669"/>
    <property type="project" value="UniProtKB-UniRule"/>
</dbReference>
<dbReference type="GO" id="GO:0006744">
    <property type="term" value="P:ubiquinone biosynthetic process"/>
    <property type="evidence" value="ECO:0007669"/>
    <property type="project" value="UniProtKB-UniRule"/>
</dbReference>
<dbReference type="CDD" id="cd13959">
    <property type="entry name" value="PT_UbiA_COQ2"/>
    <property type="match status" value="1"/>
</dbReference>
<dbReference type="FunFam" id="1.10.357.140:FF:000002">
    <property type="entry name" value="4-hydroxybenzoate octaprenyltransferase"/>
    <property type="match status" value="1"/>
</dbReference>
<dbReference type="FunFam" id="1.20.120.1780:FF:000001">
    <property type="entry name" value="4-hydroxybenzoate octaprenyltransferase"/>
    <property type="match status" value="1"/>
</dbReference>
<dbReference type="Gene3D" id="1.10.357.140">
    <property type="entry name" value="UbiA prenyltransferase"/>
    <property type="match status" value="1"/>
</dbReference>
<dbReference type="Gene3D" id="1.20.120.1780">
    <property type="entry name" value="UbiA prenyltransferase"/>
    <property type="match status" value="1"/>
</dbReference>
<dbReference type="HAMAP" id="MF_01635">
    <property type="entry name" value="UbiA"/>
    <property type="match status" value="1"/>
</dbReference>
<dbReference type="InterPro" id="IPR006370">
    <property type="entry name" value="HB_polyprenyltransferase-like"/>
</dbReference>
<dbReference type="InterPro" id="IPR039653">
    <property type="entry name" value="Prenyltransferase"/>
</dbReference>
<dbReference type="InterPro" id="IPR000537">
    <property type="entry name" value="UbiA_prenyltransferase"/>
</dbReference>
<dbReference type="InterPro" id="IPR030470">
    <property type="entry name" value="UbiA_prenylTrfase_CS"/>
</dbReference>
<dbReference type="InterPro" id="IPR044878">
    <property type="entry name" value="UbiA_sf"/>
</dbReference>
<dbReference type="NCBIfam" id="TIGR01474">
    <property type="entry name" value="ubiA_proteo"/>
    <property type="match status" value="1"/>
</dbReference>
<dbReference type="PANTHER" id="PTHR11048:SF28">
    <property type="entry name" value="4-HYDROXYBENZOATE POLYPRENYLTRANSFERASE, MITOCHONDRIAL"/>
    <property type="match status" value="1"/>
</dbReference>
<dbReference type="PANTHER" id="PTHR11048">
    <property type="entry name" value="PRENYLTRANSFERASES"/>
    <property type="match status" value="1"/>
</dbReference>
<dbReference type="Pfam" id="PF01040">
    <property type="entry name" value="UbiA"/>
    <property type="match status" value="1"/>
</dbReference>
<dbReference type="PROSITE" id="PS00943">
    <property type="entry name" value="UBIA"/>
    <property type="match status" value="1"/>
</dbReference>
<proteinExistence type="inferred from homology"/>
<reference key="1">
    <citation type="journal article" date="2010" name="PLoS ONE">
        <title>The complete multipartite genome sequence of Cupriavidus necator JMP134, a versatile pollutant degrader.</title>
        <authorList>
            <person name="Lykidis A."/>
            <person name="Perez-Pantoja D."/>
            <person name="Ledger T."/>
            <person name="Mavromatis K."/>
            <person name="Anderson I.J."/>
            <person name="Ivanova N.N."/>
            <person name="Hooper S.D."/>
            <person name="Lapidus A."/>
            <person name="Lucas S."/>
            <person name="Gonzalez B."/>
            <person name="Kyrpides N.C."/>
        </authorList>
    </citation>
    <scope>NUCLEOTIDE SEQUENCE [LARGE SCALE GENOMIC DNA]</scope>
    <source>
        <strain>JMP134 / LMG 1197</strain>
    </source>
</reference>
<accession>Q46XG9</accession>
<evidence type="ECO:0000255" key="1">
    <source>
        <dbReference type="HAMAP-Rule" id="MF_01635"/>
    </source>
</evidence>
<comment type="function">
    <text evidence="1">Catalyzes the prenylation of para-hydroxybenzoate (PHB) with an all-trans polyprenyl group. Mediates the second step in the final reaction sequence of ubiquinone-8 (UQ-8) biosynthesis, which is the condensation of the polyisoprenoid side chain with PHB, generating the first membrane-bound Q intermediate 3-octaprenyl-4-hydroxybenzoate.</text>
</comment>
<comment type="catalytic activity">
    <reaction evidence="1">
        <text>all-trans-octaprenyl diphosphate + 4-hydroxybenzoate = 4-hydroxy-3-(all-trans-octaprenyl)benzoate + diphosphate</text>
        <dbReference type="Rhea" id="RHEA:27782"/>
        <dbReference type="ChEBI" id="CHEBI:1617"/>
        <dbReference type="ChEBI" id="CHEBI:17879"/>
        <dbReference type="ChEBI" id="CHEBI:33019"/>
        <dbReference type="ChEBI" id="CHEBI:57711"/>
        <dbReference type="EC" id="2.5.1.39"/>
    </reaction>
</comment>
<comment type="cofactor">
    <cofactor evidence="1">
        <name>Mg(2+)</name>
        <dbReference type="ChEBI" id="CHEBI:18420"/>
    </cofactor>
</comment>
<comment type="pathway">
    <text evidence="1">Cofactor biosynthesis; ubiquinone biosynthesis.</text>
</comment>
<comment type="subcellular location">
    <subcellularLocation>
        <location evidence="1">Cell inner membrane</location>
        <topology evidence="1">Multi-pass membrane protein</topology>
    </subcellularLocation>
</comment>
<comment type="similarity">
    <text evidence="1">Belongs to the UbiA prenyltransferase family.</text>
</comment>
<protein>
    <recommendedName>
        <fullName evidence="1">4-hydroxybenzoate octaprenyltransferase</fullName>
        <ecNumber evidence="1">2.5.1.39</ecNumber>
    </recommendedName>
    <alternativeName>
        <fullName evidence="1">4-HB polyprenyltransferase</fullName>
    </alternativeName>
</protein>
<gene>
    <name evidence="1" type="primary">ubiA</name>
    <name type="ordered locus">Reut_A2803</name>
</gene>
<keyword id="KW-0997">Cell inner membrane</keyword>
<keyword id="KW-1003">Cell membrane</keyword>
<keyword id="KW-0460">Magnesium</keyword>
<keyword id="KW-0472">Membrane</keyword>
<keyword id="KW-0808">Transferase</keyword>
<keyword id="KW-0812">Transmembrane</keyword>
<keyword id="KW-1133">Transmembrane helix</keyword>
<keyword id="KW-0831">Ubiquinone biosynthesis</keyword>